<evidence type="ECO:0000255" key="1">
    <source>
        <dbReference type="HAMAP-Rule" id="MF_01175"/>
    </source>
</evidence>
<protein>
    <recommendedName>
        <fullName evidence="1">tRNA-modifying protein YgfZ</fullName>
    </recommendedName>
</protein>
<organism>
    <name type="scientific">Escherichia coli (strain SE11)</name>
    <dbReference type="NCBI Taxonomy" id="409438"/>
    <lineage>
        <taxon>Bacteria</taxon>
        <taxon>Pseudomonadati</taxon>
        <taxon>Pseudomonadota</taxon>
        <taxon>Gammaproteobacteria</taxon>
        <taxon>Enterobacterales</taxon>
        <taxon>Enterobacteriaceae</taxon>
        <taxon>Escherichia</taxon>
    </lineage>
</organism>
<comment type="function">
    <text evidence="1">Folate-binding protein involved in regulating the level of ATP-DnaA and in the modification of some tRNAs. It is probably a key factor in regulatory networks that act via tRNA modification, such as initiation of chromosomal replication.</text>
</comment>
<comment type="subcellular location">
    <subcellularLocation>
        <location evidence="1">Cytoplasm</location>
    </subcellularLocation>
</comment>
<comment type="similarity">
    <text evidence="1">Belongs to the tRNA-modifying YgfZ family.</text>
</comment>
<keyword id="KW-0963">Cytoplasm</keyword>
<keyword id="KW-0290">Folate-binding</keyword>
<keyword id="KW-0819">tRNA processing</keyword>
<feature type="chain" id="PRO_1000138075" description="tRNA-modifying protein YgfZ">
    <location>
        <begin position="1"/>
        <end position="326"/>
    </location>
</feature>
<feature type="binding site" evidence="1">
    <location>
        <position position="27"/>
    </location>
    <ligand>
        <name>folate</name>
        <dbReference type="ChEBI" id="CHEBI:62501"/>
    </ligand>
</feature>
<feature type="binding site" evidence="1">
    <location>
        <position position="189"/>
    </location>
    <ligand>
        <name>folate</name>
        <dbReference type="ChEBI" id="CHEBI:62501"/>
    </ligand>
</feature>
<reference key="1">
    <citation type="journal article" date="2008" name="DNA Res.">
        <title>Complete genome sequence and comparative analysis of the wild-type commensal Escherichia coli strain SE11 isolated from a healthy adult.</title>
        <authorList>
            <person name="Oshima K."/>
            <person name="Toh H."/>
            <person name="Ogura Y."/>
            <person name="Sasamoto H."/>
            <person name="Morita H."/>
            <person name="Park S.-H."/>
            <person name="Ooka T."/>
            <person name="Iyoda S."/>
            <person name="Taylor T.D."/>
            <person name="Hayashi T."/>
            <person name="Itoh K."/>
            <person name="Hattori M."/>
        </authorList>
    </citation>
    <scope>NUCLEOTIDE SEQUENCE [LARGE SCALE GENOMIC DNA]</scope>
    <source>
        <strain>SE11</strain>
    </source>
</reference>
<accession>B6I731</accession>
<name>YGFZ_ECOSE</name>
<dbReference type="EMBL" id="AP009240">
    <property type="protein sequence ID" value="BAG78685.1"/>
    <property type="molecule type" value="Genomic_DNA"/>
</dbReference>
<dbReference type="RefSeq" id="WP_000886095.1">
    <property type="nucleotide sequence ID" value="NC_011415.1"/>
</dbReference>
<dbReference type="SMR" id="B6I731"/>
<dbReference type="KEGG" id="ecy:ECSE_3161"/>
<dbReference type="HOGENOM" id="CLU_007884_6_1_6"/>
<dbReference type="Proteomes" id="UP000008199">
    <property type="component" value="Chromosome"/>
</dbReference>
<dbReference type="GO" id="GO:0005737">
    <property type="term" value="C:cytoplasm"/>
    <property type="evidence" value="ECO:0007669"/>
    <property type="project" value="UniProtKB-SubCell"/>
</dbReference>
<dbReference type="GO" id="GO:0005542">
    <property type="term" value="F:folic acid binding"/>
    <property type="evidence" value="ECO:0007669"/>
    <property type="project" value="UniProtKB-UniRule"/>
</dbReference>
<dbReference type="GO" id="GO:0016226">
    <property type="term" value="P:iron-sulfur cluster assembly"/>
    <property type="evidence" value="ECO:0007669"/>
    <property type="project" value="TreeGrafter"/>
</dbReference>
<dbReference type="GO" id="GO:0009451">
    <property type="term" value="P:RNA modification"/>
    <property type="evidence" value="ECO:0007669"/>
    <property type="project" value="InterPro"/>
</dbReference>
<dbReference type="GO" id="GO:0008033">
    <property type="term" value="P:tRNA processing"/>
    <property type="evidence" value="ECO:0007669"/>
    <property type="project" value="UniProtKB-UniRule"/>
</dbReference>
<dbReference type="FunFam" id="2.40.30.160:FF:000001">
    <property type="entry name" value="tRNA-modifying protein YgfZ"/>
    <property type="match status" value="1"/>
</dbReference>
<dbReference type="FunFam" id="3.30.70.1400:FF:000002">
    <property type="entry name" value="tRNA-modifying protein YgfZ"/>
    <property type="match status" value="1"/>
</dbReference>
<dbReference type="FunFam" id="3.30.70.1630:FF:000001">
    <property type="entry name" value="tRNA-modifying protein YgfZ"/>
    <property type="match status" value="1"/>
</dbReference>
<dbReference type="Gene3D" id="2.40.30.160">
    <property type="match status" value="1"/>
</dbReference>
<dbReference type="Gene3D" id="3.30.70.1630">
    <property type="match status" value="1"/>
</dbReference>
<dbReference type="Gene3D" id="3.30.70.1400">
    <property type="entry name" value="Aminomethyltransferase beta-barrel domains"/>
    <property type="match status" value="1"/>
</dbReference>
<dbReference type="HAMAP" id="MF_01175">
    <property type="entry name" value="tRNA_modifying_YgfZ"/>
    <property type="match status" value="1"/>
</dbReference>
<dbReference type="InterPro" id="IPR006222">
    <property type="entry name" value="GCV_T_N"/>
</dbReference>
<dbReference type="InterPro" id="IPR029043">
    <property type="entry name" value="GcvT/YgfZ_C"/>
</dbReference>
<dbReference type="InterPro" id="IPR023758">
    <property type="entry name" value="tRNA-modifying_YgfZ"/>
</dbReference>
<dbReference type="InterPro" id="IPR045179">
    <property type="entry name" value="YgfZ/GcvT"/>
</dbReference>
<dbReference type="InterPro" id="IPR017703">
    <property type="entry name" value="YgfZ/GcvT_CS"/>
</dbReference>
<dbReference type="InterPro" id="IPR048451">
    <property type="entry name" value="YgfZ_barrel"/>
</dbReference>
<dbReference type="NCBIfam" id="NF007110">
    <property type="entry name" value="PRK09559.1"/>
    <property type="match status" value="1"/>
</dbReference>
<dbReference type="NCBIfam" id="TIGR03317">
    <property type="entry name" value="ygfZ_signature"/>
    <property type="match status" value="1"/>
</dbReference>
<dbReference type="PANTHER" id="PTHR22602">
    <property type="entry name" value="TRANSFERASE CAF17, MITOCHONDRIAL-RELATED"/>
    <property type="match status" value="1"/>
</dbReference>
<dbReference type="PANTHER" id="PTHR22602:SF0">
    <property type="entry name" value="TRANSFERASE CAF17, MITOCHONDRIAL-RELATED"/>
    <property type="match status" value="1"/>
</dbReference>
<dbReference type="Pfam" id="PF01571">
    <property type="entry name" value="GCV_T"/>
    <property type="match status" value="1"/>
</dbReference>
<dbReference type="Pfam" id="PF21130">
    <property type="entry name" value="YgfZ_barrel"/>
    <property type="match status" value="1"/>
</dbReference>
<dbReference type="SUPFAM" id="SSF101790">
    <property type="entry name" value="Aminomethyltransferase beta-barrel domain"/>
    <property type="match status" value="1"/>
</dbReference>
<dbReference type="SUPFAM" id="SSF103025">
    <property type="entry name" value="Folate-binding domain"/>
    <property type="match status" value="1"/>
</dbReference>
<sequence length="326" mass="36123">MAFTPFPPRQPTASARLPLTLMTLDDWALATITGADSEKYMQGQVTADVSQMTENQHLLAAHCDAKGKMWSNLRLFRDGDGFAWIERRSVREPQLTELKKYAVFSKVTIAPDDERVLLGVAGFQARAALANLFSELPSKEKQVVKEGATTLLWFEHPAERFLIVTDEATANMLTDKLRGEAELNNSQQWLALNIEAGFPVIDAANSGQFIPQATNLQALGGISFKKGCYTGQEMVARAKFRGANKRALWLLAGSASRLPEAGEDLELKMGENWRRTGTVLAAVKLEDGQVVVQVVMNNDMEPDSIFRVRDDANTLHIEPLPYSLEE</sequence>
<gene>
    <name evidence="1" type="primary">ygfZ</name>
    <name type="ordered locus">ECSE_3161</name>
</gene>
<proteinExistence type="inferred from homology"/>